<feature type="chain" id="PRO_0000313817" description="Proton channel OTOP1">
    <location>
        <begin position="1"/>
        <end position="600"/>
    </location>
</feature>
<feature type="topological domain" description="Cytoplasmic" evidence="17">
    <location>
        <begin position="1"/>
        <end position="56"/>
    </location>
</feature>
<feature type="transmembrane region" description="Helical; Name=1" evidence="1">
    <location>
        <begin position="57"/>
        <end position="78"/>
    </location>
</feature>
<feature type="topological domain" description="Extracellular" evidence="17">
    <location>
        <begin position="79"/>
        <end position="86"/>
    </location>
</feature>
<feature type="transmembrane region" description="Helical; Name=2" evidence="1">
    <location>
        <begin position="87"/>
        <end position="110"/>
    </location>
</feature>
<feature type="topological domain" description="Cytoplasmic" evidence="17">
    <location>
        <begin position="111"/>
        <end position="128"/>
    </location>
</feature>
<feature type="transmembrane region" description="Helical; Name=3" evidence="1">
    <location>
        <begin position="129"/>
        <end position="151"/>
    </location>
</feature>
<feature type="topological domain" description="Extracellular" evidence="17">
    <location>
        <begin position="152"/>
        <end position="161"/>
    </location>
</feature>
<feature type="transmembrane region" description="Helical; Name=4" evidence="1">
    <location>
        <begin position="162"/>
        <end position="186"/>
    </location>
</feature>
<feature type="topological domain" description="Cytoplasmic" evidence="17">
    <location>
        <begin position="187"/>
        <end position="194"/>
    </location>
</feature>
<feature type="transmembrane region" description="Helical; Name=5" evidence="1">
    <location>
        <begin position="195"/>
        <end position="217"/>
    </location>
</feature>
<feature type="topological domain" description="Extracellular" evidence="17">
    <location>
        <begin position="218"/>
        <end position="262"/>
    </location>
</feature>
<feature type="transmembrane region" description="Helical; Name=6" evidence="1">
    <location>
        <begin position="263"/>
        <end position="288"/>
    </location>
</feature>
<feature type="topological domain" description="Cytoplasmic" evidence="17">
    <location>
        <begin position="289"/>
        <end position="309"/>
    </location>
</feature>
<feature type="transmembrane region" description="Helical; Name=7" evidence="1">
    <location>
        <begin position="310"/>
        <end position="332"/>
    </location>
</feature>
<feature type="topological domain" description="Extracellular" evidence="17">
    <location>
        <begin position="333"/>
        <end position="342"/>
    </location>
</feature>
<feature type="transmembrane region" description="Helical; Name=8" evidence="1">
    <location>
        <begin position="343"/>
        <end position="368"/>
    </location>
</feature>
<feature type="topological domain" description="Cytoplasmic" evidence="17">
    <location>
        <begin position="369"/>
        <end position="386"/>
    </location>
</feature>
<feature type="transmembrane region" description="Helical; Name=9" evidence="1">
    <location>
        <begin position="387"/>
        <end position="411"/>
    </location>
</feature>
<feature type="topological domain" description="Extracellular" evidence="17">
    <location>
        <begin position="412"/>
        <end position="421"/>
    </location>
</feature>
<feature type="transmembrane region" description="Helical; Name=10" evidence="1">
    <location>
        <begin position="422"/>
        <end position="442"/>
    </location>
</feature>
<feature type="topological domain" description="Cytoplasmic" evidence="17">
    <location>
        <begin position="443"/>
        <end position="532"/>
    </location>
</feature>
<feature type="transmembrane region" description="Helical; Name=11" evidence="1">
    <location>
        <begin position="533"/>
        <end position="551"/>
    </location>
</feature>
<feature type="topological domain" description="Extracellular" evidence="17">
    <location>
        <begin position="552"/>
        <end position="569"/>
    </location>
</feature>
<feature type="transmembrane region" description="Helical; Name=12" evidence="1">
    <location>
        <begin position="570"/>
        <end position="593"/>
    </location>
</feature>
<feature type="topological domain" description="Cytoplasmic" evidence="17">
    <location>
        <begin position="594"/>
        <end position="600"/>
    </location>
</feature>
<feature type="region of interest" description="Disordered" evidence="2">
    <location>
        <begin position="1"/>
        <end position="50"/>
    </location>
</feature>
<feature type="compositionally biased region" description="Low complexity" evidence="2">
    <location>
        <begin position="7"/>
        <end position="27"/>
    </location>
</feature>
<feature type="splice variant" id="VSP_030160" description="In isoform 2." evidence="16">
    <location>
        <begin position="1"/>
        <end position="190"/>
    </location>
</feature>
<feature type="splice variant" id="VSP_030161" description="In isoform 3." evidence="15">
    <original>MPGGPGAPSSPAASSGSSRAAPSGIAACPLSPPPL</original>
    <variation>MLTPPETLSAFLAGGFLGCLCLLEGLGCLRIA</variation>
    <location>
        <begin position="1"/>
        <end position="35"/>
    </location>
</feature>
<feature type="mutagenesis site" description="Does not affect proton channel activity." evidence="9">
    <original>K</original>
    <variation>E</variation>
    <location>
        <position position="149"/>
    </location>
</feature>
<feature type="mutagenesis site" description="In tlt (tilted phenotype); affected mice have defects in the formation of otoconia in the inner ear, but do not suffer from deafness or other inner ear defects. They cannot perceive gravity and have problems with spatial orientation and with keeping their equilibrium. They show typical head-tilting behavior and are unable to swim. Impaired subcellular localization to the plasma membrane. Effects may be due to dysregulation of pH." evidence="3 6 8">
    <original>A</original>
    <variation>E</variation>
    <location>
        <position position="151"/>
    </location>
</feature>
<feature type="mutagenesis site" description="Does not affect alkali activation." evidence="12">
    <original>H</original>
    <variation>A</variation>
    <location>
        <position position="185"/>
    </location>
</feature>
<feature type="mutagenesis site" description="Does not affect the response to NH(4)Cl. Does affect alkali activation." evidence="12 14">
    <original>K</original>
    <variation>A</variation>
    <location>
        <position position="187"/>
    </location>
</feature>
<feature type="mutagenesis site" description="Greatly reduced proton channel activity." evidence="9">
    <original>E</original>
    <variation>K</variation>
    <location>
        <position position="219"/>
    </location>
</feature>
<feature type="mutagenesis site" description="Affects alkali activation, but not acid activation." evidence="12">
    <original>K</original>
    <variation>A</variation>
    <location>
        <position position="221"/>
    </location>
</feature>
<feature type="mutagenesis site" description="Does affect alkali activation." evidence="12">
    <original>H</original>
    <variation>A</variation>
    <location>
        <position position="222"/>
    </location>
</feature>
<feature type="mutagenesis site" description="Greatly reduced the currents in response to NH(4)Cl. Does not affect response to acid stimulation." evidence="14">
    <original>R</original>
    <variation>A</variation>
    <location>
        <position position="292"/>
    </location>
</feature>
<feature type="mutagenesis site" description="In mlh (mergulhador phenotype); affected mice have defects in the formation of otoconia in the inner ear, but do not suffer from deafness or other inner ear defects. They cannot perceive gravity and have problems with spatial orientation and with keeping their equilibrium. They show typical head-tilting behavior and are unable to swim. Impaired subcellular localization to the plasma membrane." evidence="3 6">
    <original>L</original>
    <variation>Q</variation>
    <location>
        <position position="408"/>
    </location>
</feature>
<feature type="mutagenesis site" description="Greatly reduced proton channel activity." evidence="9">
    <original>E</original>
    <variation>R</variation>
    <location>
        <position position="433"/>
    </location>
</feature>
<feature type="mutagenesis site" description="Does not affect the response to NH(4)Cl." evidence="14">
    <original>K</original>
    <variation>A</variation>
    <location>
        <position position="527"/>
    </location>
</feature>
<feature type="mutagenesis site" description="Does not affect the response to NH(4)Cl." evidence="14">
    <original>R</original>
    <variation>A</variation>
    <location>
        <position position="528"/>
    </location>
</feature>
<feature type="mutagenesis site" description="Affects alkali activation, but not acid activation." evidence="12">
    <original>R</original>
    <variation>A</variation>
    <location>
        <position position="554"/>
    </location>
</feature>
<feature type="mutagenesis site" description="Increases sensitivity to potentiation by Zn(2+)." evidence="13">
    <original>R</original>
    <variation>H</variation>
    <location>
        <position position="554"/>
    </location>
</feature>
<feature type="mutagenesis site" description="Reduced proton channel activity." evidence="9">
    <original>R</original>
    <variation>E</variation>
    <location>
        <position position="586"/>
    </location>
</feature>
<feature type="sequence conflict" description="In Ref. 2; BAC30704/BAC30785." ref="2">
    <original>G</original>
    <variation>A</variation>
    <location>
        <position position="396"/>
    </location>
</feature>
<feature type="sequence conflict" description="In Ref. 2; BAC30704." evidence="17" ref="2">
    <original>L</original>
    <variation>P</variation>
    <location>
        <position position="401"/>
    </location>
</feature>
<dbReference type="EMBL" id="AF548337">
    <property type="protein sequence ID" value="AAO33824.1"/>
    <property type="molecule type" value="mRNA"/>
</dbReference>
<dbReference type="EMBL" id="BK000650">
    <property type="protein sequence ID" value="DAA00897.1"/>
    <property type="molecule type" value="Genomic_DNA"/>
</dbReference>
<dbReference type="EMBL" id="BK000650">
    <property type="protein sequence ID" value="DAA00898.1"/>
    <property type="molecule type" value="Genomic_DNA"/>
</dbReference>
<dbReference type="EMBL" id="AK040792">
    <property type="protein sequence ID" value="BAC30704.1"/>
    <property type="molecule type" value="mRNA"/>
</dbReference>
<dbReference type="EMBL" id="AK041023">
    <property type="protein sequence ID" value="BAC30785.1"/>
    <property type="molecule type" value="mRNA"/>
</dbReference>
<dbReference type="EMBL" id="AC084071">
    <property type="status" value="NOT_ANNOTATED_CDS"/>
    <property type="molecule type" value="Genomic_DNA"/>
</dbReference>
<dbReference type="RefSeq" id="NP_766297.2">
    <molecule id="Q80VM9-1"/>
    <property type="nucleotide sequence ID" value="NM_172709.3"/>
</dbReference>
<dbReference type="SMR" id="Q80VM9"/>
<dbReference type="FunCoup" id="Q80VM9">
    <property type="interactions" value="865"/>
</dbReference>
<dbReference type="STRING" id="10090.ENSMUSP00000109734"/>
<dbReference type="TCDB" id="1.A.110.1.1">
    <property type="family name" value="the channel-forming otopetrin (otop) family"/>
</dbReference>
<dbReference type="iPTMnet" id="Q80VM9"/>
<dbReference type="PhosphoSitePlus" id="Q80VM9"/>
<dbReference type="PaxDb" id="10090-ENSMUSP00000109734"/>
<dbReference type="ProteomicsDB" id="295486">
    <molecule id="Q80VM9-1"/>
</dbReference>
<dbReference type="ProteomicsDB" id="372053"/>
<dbReference type="Antibodypedia" id="22553">
    <property type="antibodies" value="85 antibodies from 20 providers"/>
</dbReference>
<dbReference type="DNASU" id="21906"/>
<dbReference type="Ensembl" id="ENSMUST00000114099.6">
    <molecule id="Q80VM9-1"/>
    <property type="protein sequence ID" value="ENSMUSP00000109734.6"/>
    <property type="gene ID" value="ENSMUSG00000051596.16"/>
</dbReference>
<dbReference type="GeneID" id="21906"/>
<dbReference type="KEGG" id="mmu:21906"/>
<dbReference type="UCSC" id="uc008xgm.1">
    <molecule id="Q80VM9-1"/>
    <property type="organism name" value="mouse"/>
</dbReference>
<dbReference type="UCSC" id="uc012dvn.1">
    <property type="organism name" value="mouse"/>
</dbReference>
<dbReference type="AGR" id="MGI:2388363"/>
<dbReference type="CTD" id="133060"/>
<dbReference type="MGI" id="MGI:2388363">
    <property type="gene designation" value="Otop1"/>
</dbReference>
<dbReference type="VEuPathDB" id="HostDB:ENSMUSG00000051596"/>
<dbReference type="eggNOG" id="KOG4740">
    <property type="taxonomic scope" value="Eukaryota"/>
</dbReference>
<dbReference type="GeneTree" id="ENSGT00940000159350"/>
<dbReference type="InParanoid" id="Q80VM9"/>
<dbReference type="OMA" id="HATTCWI"/>
<dbReference type="OrthoDB" id="78454at9989"/>
<dbReference type="PhylomeDB" id="Q80VM9"/>
<dbReference type="TreeFam" id="TF313428"/>
<dbReference type="BioGRID-ORCS" id="21906">
    <property type="hits" value="2 hits in 38 CRISPR screens"/>
</dbReference>
<dbReference type="PRO" id="PR:Q80VM9"/>
<dbReference type="Proteomes" id="UP000000589">
    <property type="component" value="Chromosome 5"/>
</dbReference>
<dbReference type="RNAct" id="Q80VM9">
    <property type="molecule type" value="protein"/>
</dbReference>
<dbReference type="Bgee" id="ENSMUSG00000051596">
    <property type="expression patterns" value="Expressed in otolith organ and 49 other cell types or tissues"/>
</dbReference>
<dbReference type="ExpressionAtlas" id="Q80VM9">
    <property type="expression patterns" value="baseline and differential"/>
</dbReference>
<dbReference type="GO" id="GO:0016020">
    <property type="term" value="C:membrane"/>
    <property type="evidence" value="ECO:0000314"/>
    <property type="project" value="MGI"/>
</dbReference>
<dbReference type="GO" id="GO:0005902">
    <property type="term" value="C:microvillus"/>
    <property type="evidence" value="ECO:0007669"/>
    <property type="project" value="UniProtKB-SubCell"/>
</dbReference>
<dbReference type="GO" id="GO:0005886">
    <property type="term" value="C:plasma membrane"/>
    <property type="evidence" value="ECO:0000314"/>
    <property type="project" value="UniProtKB"/>
</dbReference>
<dbReference type="GO" id="GO:0042802">
    <property type="term" value="F:identical protein binding"/>
    <property type="evidence" value="ECO:0000250"/>
    <property type="project" value="UniProtKB"/>
</dbReference>
<dbReference type="GO" id="GO:0015252">
    <property type="term" value="F:proton channel activity"/>
    <property type="evidence" value="ECO:0000314"/>
    <property type="project" value="UniProtKB"/>
</dbReference>
<dbReference type="GO" id="GO:0031214">
    <property type="term" value="P:biomineral tissue development"/>
    <property type="evidence" value="ECO:0007669"/>
    <property type="project" value="UniProtKB-KW"/>
</dbReference>
<dbReference type="GO" id="GO:0032869">
    <property type="term" value="P:cellular response to insulin stimulus"/>
    <property type="evidence" value="ECO:0000315"/>
    <property type="project" value="UniProtKB"/>
</dbReference>
<dbReference type="GO" id="GO:0009590">
    <property type="term" value="P:detection of gravity"/>
    <property type="evidence" value="ECO:0000315"/>
    <property type="project" value="MGI"/>
</dbReference>
<dbReference type="GO" id="GO:0042472">
    <property type="term" value="P:inner ear morphogenesis"/>
    <property type="evidence" value="ECO:0000315"/>
    <property type="project" value="MGI"/>
</dbReference>
<dbReference type="GO" id="GO:0060336">
    <property type="term" value="P:negative regulation of type II interferon-mediated signaling pathway"/>
    <property type="evidence" value="ECO:0000315"/>
    <property type="project" value="UniProtKB"/>
</dbReference>
<dbReference type="GO" id="GO:1902600">
    <property type="term" value="P:proton transmembrane transport"/>
    <property type="evidence" value="ECO:0000314"/>
    <property type="project" value="UniProtKB"/>
</dbReference>
<dbReference type="InterPro" id="IPR004878">
    <property type="entry name" value="Otopetrin"/>
</dbReference>
<dbReference type="PANTHER" id="PTHR21522">
    <property type="entry name" value="PROTON CHANNEL OTOP"/>
    <property type="match status" value="1"/>
</dbReference>
<dbReference type="PANTHER" id="PTHR21522:SF19">
    <property type="entry name" value="PROTON CHANNEL OTOP1"/>
    <property type="match status" value="1"/>
</dbReference>
<dbReference type="Pfam" id="PF03189">
    <property type="entry name" value="Otopetrin"/>
    <property type="match status" value="3"/>
</dbReference>
<gene>
    <name evidence="15 18" type="primary">Otop1</name>
</gene>
<accession>Q80VM9</accession>
<accession>A0A0R4J1J4</accession>
<accession>E9QMU2</accession>
<accession>Q7M735</accession>
<accession>Q8BRZ4</accession>
<accession>Q8BS22</accession>
<sequence length="600" mass="65755">MPGGPGAPSSPAASSGSSRAAPSGIAACPLSPPPLARGSPQASGPRRGASVPQKLAETLSSQYGLNVFVAGLLFLLAWAVHATGVGKSDLLCVLTALMLLQLLWMLWYVGRSYMQRRLIRPKDTHAGARWLRGSITLFAFITVVLGCLKVAYFIGFSECLSATEGVFPVTHAVHTLLQVYFLWGHAKDIIMSFKTLERFGVIHSVFTNLLLWANSVLNESKHQLNEHKERLITLGFGNITIVLDDHTPQCNCTPPALCSALSHGIYYLYPFNIEYQILASTMLYVLWKNIGRRVDSSQHQKMQCRFDGVLVGSVLGLTVLAATIAVVVVYMIHIGRSKSKSESALIMFYLYAITVLLLMGAAGLVGSWIYRVDEKSLDESKNPARKLDVDLLVATGSGSWLLSWGSILAIACAETRPPYTWYNLPYSVLVIVEKYVQNIFIIESVHLEPEGVPEDVRTLRVVTVCSSEAAALAASTLGSQGMAQDGSPAVNGNLCLQQRCGKEDQESGWEGATGTTRCLDFLQGGMKRRLLRNITAFLFLCNISLWIPPAFGCRPEYDNGLEEIVFGFEPWIIVVNLAMPFSIFYRMHAAAALFEVYCKI</sequence>
<organism>
    <name type="scientific">Mus musculus</name>
    <name type="common">Mouse</name>
    <dbReference type="NCBI Taxonomy" id="10090"/>
    <lineage>
        <taxon>Eukaryota</taxon>
        <taxon>Metazoa</taxon>
        <taxon>Chordata</taxon>
        <taxon>Craniata</taxon>
        <taxon>Vertebrata</taxon>
        <taxon>Euteleostomi</taxon>
        <taxon>Mammalia</taxon>
        <taxon>Eutheria</taxon>
        <taxon>Euarchontoglires</taxon>
        <taxon>Glires</taxon>
        <taxon>Rodentia</taxon>
        <taxon>Myomorpha</taxon>
        <taxon>Muroidea</taxon>
        <taxon>Muridae</taxon>
        <taxon>Murinae</taxon>
        <taxon>Mus</taxon>
        <taxon>Mus</taxon>
    </lineage>
</organism>
<protein>
    <recommendedName>
        <fullName evidence="17">Proton channel OTOP1</fullName>
    </recommendedName>
    <alternativeName>
        <fullName evidence="15">Otopetrin-1</fullName>
    </alternativeName>
</protein>
<evidence type="ECO:0000250" key="1">
    <source>
        <dbReference type="UniProtKB" id="Q7ZWK8"/>
    </source>
</evidence>
<evidence type="ECO:0000256" key="2">
    <source>
        <dbReference type="SAM" id="MobiDB-lite"/>
    </source>
</evidence>
<evidence type="ECO:0000269" key="3">
    <source>
    </source>
</evidence>
<evidence type="ECO:0000269" key="4">
    <source>
    </source>
</evidence>
<evidence type="ECO:0000269" key="5">
    <source>
    </source>
</evidence>
<evidence type="ECO:0000269" key="6">
    <source>
    </source>
</evidence>
<evidence type="ECO:0000269" key="7">
    <source>
    </source>
</evidence>
<evidence type="ECO:0000269" key="8">
    <source>
    </source>
</evidence>
<evidence type="ECO:0000269" key="9">
    <source>
    </source>
</evidence>
<evidence type="ECO:0000269" key="10">
    <source>
    </source>
</evidence>
<evidence type="ECO:0000269" key="11">
    <source>
    </source>
</evidence>
<evidence type="ECO:0000269" key="12">
    <source>
    </source>
</evidence>
<evidence type="ECO:0000269" key="13">
    <source>
    </source>
</evidence>
<evidence type="ECO:0000269" key="14">
    <source>
    </source>
</evidence>
<evidence type="ECO:0000303" key="15">
    <source>
    </source>
</evidence>
<evidence type="ECO:0000303" key="16">
    <source>
    </source>
</evidence>
<evidence type="ECO:0000305" key="17"/>
<evidence type="ECO:0000312" key="18">
    <source>
        <dbReference type="MGI" id="MGI:2388363"/>
    </source>
</evidence>
<comment type="function">
    <text evidence="3 4 5 7 8 9 10 11 12 13 14">Proton-selective ion channel (PubMed:29371428, PubMed:31160780, PubMed:31543453, PubMed:36596786, PubMed:37798269). Biphasically modulated by acid and alkali, mediating proton influx and efflux in response to extracellular acid and base stimulation, respectively (PubMed:36596786, PubMed:37798269). Sour taste receptor, which carries inward currents in response to extracellular acidification (PubMed:29371428, PubMed:31543264, PubMed:31543453, PubMed:37053086). Sensor for ammonium chloride (NH(4)Cl) in taste receptor cells. NH(4)Cl acts by increasing the intracellular pH, thereby generating a driving force for proton entry through OTOP1 channel (PubMed:37798269). Might also participate in alkaline sensation (PubMed:37798269). Plays a role in the regulation of Ca(2+) flux in response to purigenic (ATP, ADP and UDP) stimuli, leading to increase in cytosolic Ca(2+) due to influx of extracellular calcium (PubMed:17606897, PubMed:20554841). May play this role by inhibiting P2Y purinoceptor-mediated Ca(2+) release in a Ca(2+)-dependent manner and promote an influx of Ca(2+) in response to ATP (PubMed:20554841). Through this mechanism and possibly others, plays a role in the formation and function of calcium carbonate-based structures in the vestibular system of the inner ear, called otoconia, that sense gravity and linear acceleration (PubMed:12651873, PubMed:20554841). In obesity, may attenuate adipose tissue inflammation, through the negative regulation of IFNG signaling, hence may play an adaptive role in the maintainance of metabolic homeostasis (PubMed:24379350). Following alkali activation, may also be permeable Na(+), K(+), Cs(+) and Li(+) (PubMed:37798269).</text>
</comment>
<comment type="catalytic activity">
    <reaction evidence="8 9 11 12 14">
        <text>H(+)(in) = H(+)(out)</text>
        <dbReference type="Rhea" id="RHEA:34979"/>
        <dbReference type="ChEBI" id="CHEBI:15378"/>
    </reaction>
</comment>
<comment type="activity regulation">
    <text evidence="8 11 12 13 14">Activated by both acid and alkali, with proton influx in response to extracellular acid and proton efflux during alkali stimulation (PubMed:29371428, PubMed:36596786). Inhibited by Zn(2+); this inhibition is thought to be pH-sensitive (PubMed:29371428, PubMed:31543453, PubMed:36596786, PubMed:37798269). Currents evoked in response to mild acid (pH 6.0) stimulus may also be mildly potentiated by exposure to Zn(2+) (PubMed:37053086, PubMed:37798269). Activated by NH(4)Cl (PubMed:37798269).</text>
</comment>
<comment type="subunit">
    <text evidence="1 7">Homodimer (By similarity). Interacts with STAT1, independently of STAT1 phosphorylation status (PubMed:24379350).</text>
</comment>
<comment type="subcellular location">
    <subcellularLocation>
        <location evidence="8">Cell membrane</location>
        <topology evidence="1">Multi-pass membrane protein</topology>
    </subcellularLocation>
    <subcellularLocation>
        <location evidence="5">Cell projection</location>
        <location evidence="5">Microvillus</location>
    </subcellularLocation>
    <text evidence="3 5 6">Found in the gelatinous membrane overlying the inner ear macular epithelium (PubMed:12651873, PubMed:21236346). Also detected in the apical microvilli in inner ear supporting cells (PubMed:20554841).</text>
</comment>
<comment type="alternative products">
    <event type="alternative splicing"/>
    <isoform>
        <id>Q80VM9-1</id>
        <name>1</name>
        <name>A</name>
        <name>Otopetrin-1a</name>
        <name>Otop1-a</name>
        <sequence type="displayed"/>
    </isoform>
    <isoform>
        <id>Q80VM9-2</id>
        <name>2</name>
        <name>C</name>
        <name>Otopetrin-1c</name>
        <name>Otop1-c</name>
        <sequence type="described" ref="VSP_030160"/>
    </isoform>
    <isoform>
        <id>Q80VM9-3</id>
        <name>3</name>
        <name>B</name>
        <name>Otopetrin-1b</name>
        <name>Otop1-b</name>
        <sequence type="described" ref="VSP_030161"/>
    </isoform>
</comment>
<comment type="tissue specificity">
    <text evidence="3 5 7 8 10 11 12">Expressed in thymus, heart, kidney, skin, vestibular system of the inner ear, sour taste cells, heart, uterus, dorsal root ganglion, adrenal gland, lactating mammary gland and stimulated mast cells (PubMed:12651873, PubMed:29371428). In the inner ear, expressed in the supporting cells in extrastriolar regions of the saccule and in the utricle, but not in the cochlea (PubMed:20554841). Expressed in brown adipose tissue. Expressed in epididymal white adipose tissue (eWAT), as well as in inguinal fat, in obese animals, but hardly detectable in eWAT from lean mice (PubMed:24379350). Expressed in acid-sensing taste receptor cells (PKD2L1-positive cells), but not in other types of taste cells (at protein level) (PubMed:29371428, PubMed:31543264, PubMed:31543453, PubMed:36596786).</text>
</comment>
<comment type="developmental stage">
    <text evidence="3 5">In the developing ear, first detected at 13.5 dpc in the utricule. Expression in the saccule begins at 14.5 dpc (PubMed:20554841). At 16.5 dpc, present throughout the whole epithelium in the utricle and saccule. At this stage, expressed in macula nonstriolar, but not striolar regions (PubMed:12651873, PubMed:20554841). At 16.5 dpc, also found in the gelatinous membrane overlying macular epithelia (at protein level) (PubMed:12651873). At 18.5 dpc, expressed in otocyst (PubMed:12651873).</text>
</comment>
<comment type="induction">
    <text evidence="7">Up-regulated in adipocytes in response to TNF, but not IFNG (PubMed:24379350). Up-regulated in epididymal white adipose tissue in animals on high-fat diet (PubMed:24379350).</text>
</comment>
<comment type="domain">
    <text evidence="12 13">Residues involved in the gating by extracellular Zn (2+) and pH are located in the extracellular loops between transmembrane domain 5-6 and transmembrane domain 11-12.</text>
</comment>
<comment type="disruption phenotype">
    <text evidence="5 10 11 14">Knockout mice are phenotypically normal. They show vestibular dysfunction (inability to swim) and otoconial agenesis (PubMed:20554841, PubMed:31543453). They also exhibit severely diminished cellular and gustatory nerve response to acids (PubMed:31543264, PubMed:31543453). However, they do not exhibit any difference compared to wild-type mice in behavioral aversion to solutions containing high concentrations of mineral or organic acids, possibly because of the activation of nociceptive neurons through an OTOP1-independent mechanism (PubMed:31543264, PubMed:31543453). Knockout mice show a significantly diminished aversion to NH(4)Cl compared to wild-type animals (PubMed:37798269).</text>
</comment>
<comment type="similarity">
    <text evidence="17">Belongs to the otopetrin family.</text>
</comment>
<comment type="online information" name="Protein Spotlight">
    <link uri="https://www.proteinspotlight.org/back_issues/089"/>
    <text>Ear of stone - Issue 89 of December 2007</text>
</comment>
<reference key="1">
    <citation type="journal article" date="2003" name="Hum. Mol. Genet.">
        <title>Non-syndromic vestibular disorder with otoconial agenesis in tilted/mergulhador mice caused by mutations in otopetrin 1.</title>
        <authorList>
            <person name="Hurle B."/>
            <person name="Ignatova E."/>
            <person name="Massironi S.M."/>
            <person name="Mashimo T."/>
            <person name="Rios X."/>
            <person name="Thalmann I."/>
            <person name="Thalmann R."/>
            <person name="Ornitz D.M."/>
        </authorList>
    </citation>
    <scope>NUCLEOTIDE SEQUENCE [MRNA] (ISOFORMS 1 AND 3)</scope>
    <scope>FUNCTION</scope>
    <scope>DEVELOPMENTAL STAGE</scope>
    <scope>TISSUE SPECIFICITY</scope>
    <scope>MUTAGENESIS OF ALA-151 AND LEU-408</scope>
    <source>
        <strain>C57BL/6J</strain>
        <tissue>Otocyst</tissue>
    </source>
</reference>
<reference key="2">
    <citation type="journal article" date="2005" name="Science">
        <title>The transcriptional landscape of the mammalian genome.</title>
        <authorList>
            <person name="Carninci P."/>
            <person name="Kasukawa T."/>
            <person name="Katayama S."/>
            <person name="Gough J."/>
            <person name="Frith M.C."/>
            <person name="Maeda N."/>
            <person name="Oyama R."/>
            <person name="Ravasi T."/>
            <person name="Lenhard B."/>
            <person name="Wells C."/>
            <person name="Kodzius R."/>
            <person name="Shimokawa K."/>
            <person name="Bajic V.B."/>
            <person name="Brenner S.E."/>
            <person name="Batalov S."/>
            <person name="Forrest A.R."/>
            <person name="Zavolan M."/>
            <person name="Davis M.J."/>
            <person name="Wilming L.G."/>
            <person name="Aidinis V."/>
            <person name="Allen J.E."/>
            <person name="Ambesi-Impiombato A."/>
            <person name="Apweiler R."/>
            <person name="Aturaliya R.N."/>
            <person name="Bailey T.L."/>
            <person name="Bansal M."/>
            <person name="Baxter L."/>
            <person name="Beisel K.W."/>
            <person name="Bersano T."/>
            <person name="Bono H."/>
            <person name="Chalk A.M."/>
            <person name="Chiu K.P."/>
            <person name="Choudhary V."/>
            <person name="Christoffels A."/>
            <person name="Clutterbuck D.R."/>
            <person name="Crowe M.L."/>
            <person name="Dalla E."/>
            <person name="Dalrymple B.P."/>
            <person name="de Bono B."/>
            <person name="Della Gatta G."/>
            <person name="di Bernardo D."/>
            <person name="Down T."/>
            <person name="Engstrom P."/>
            <person name="Fagiolini M."/>
            <person name="Faulkner G."/>
            <person name="Fletcher C.F."/>
            <person name="Fukushima T."/>
            <person name="Furuno M."/>
            <person name="Futaki S."/>
            <person name="Gariboldi M."/>
            <person name="Georgii-Hemming P."/>
            <person name="Gingeras T.R."/>
            <person name="Gojobori T."/>
            <person name="Green R.E."/>
            <person name="Gustincich S."/>
            <person name="Harbers M."/>
            <person name="Hayashi Y."/>
            <person name="Hensch T.K."/>
            <person name="Hirokawa N."/>
            <person name="Hill D."/>
            <person name="Huminiecki L."/>
            <person name="Iacono M."/>
            <person name="Ikeo K."/>
            <person name="Iwama A."/>
            <person name="Ishikawa T."/>
            <person name="Jakt M."/>
            <person name="Kanapin A."/>
            <person name="Katoh M."/>
            <person name="Kawasawa Y."/>
            <person name="Kelso J."/>
            <person name="Kitamura H."/>
            <person name="Kitano H."/>
            <person name="Kollias G."/>
            <person name="Krishnan S.P."/>
            <person name="Kruger A."/>
            <person name="Kummerfeld S.K."/>
            <person name="Kurochkin I.V."/>
            <person name="Lareau L.F."/>
            <person name="Lazarevic D."/>
            <person name="Lipovich L."/>
            <person name="Liu J."/>
            <person name="Liuni S."/>
            <person name="McWilliam S."/>
            <person name="Madan Babu M."/>
            <person name="Madera M."/>
            <person name="Marchionni L."/>
            <person name="Matsuda H."/>
            <person name="Matsuzawa S."/>
            <person name="Miki H."/>
            <person name="Mignone F."/>
            <person name="Miyake S."/>
            <person name="Morris K."/>
            <person name="Mottagui-Tabar S."/>
            <person name="Mulder N."/>
            <person name="Nakano N."/>
            <person name="Nakauchi H."/>
            <person name="Ng P."/>
            <person name="Nilsson R."/>
            <person name="Nishiguchi S."/>
            <person name="Nishikawa S."/>
            <person name="Nori F."/>
            <person name="Ohara O."/>
            <person name="Okazaki Y."/>
            <person name="Orlando V."/>
            <person name="Pang K.C."/>
            <person name="Pavan W.J."/>
            <person name="Pavesi G."/>
            <person name="Pesole G."/>
            <person name="Petrovsky N."/>
            <person name="Piazza S."/>
            <person name="Reed J."/>
            <person name="Reid J.F."/>
            <person name="Ring B.Z."/>
            <person name="Ringwald M."/>
            <person name="Rost B."/>
            <person name="Ruan Y."/>
            <person name="Salzberg S.L."/>
            <person name="Sandelin A."/>
            <person name="Schneider C."/>
            <person name="Schoenbach C."/>
            <person name="Sekiguchi K."/>
            <person name="Semple C.A."/>
            <person name="Seno S."/>
            <person name="Sessa L."/>
            <person name="Sheng Y."/>
            <person name="Shibata Y."/>
            <person name="Shimada H."/>
            <person name="Shimada K."/>
            <person name="Silva D."/>
            <person name="Sinclair B."/>
            <person name="Sperling S."/>
            <person name="Stupka E."/>
            <person name="Sugiura K."/>
            <person name="Sultana R."/>
            <person name="Takenaka Y."/>
            <person name="Taki K."/>
            <person name="Tammoja K."/>
            <person name="Tan S.L."/>
            <person name="Tang S."/>
            <person name="Taylor M.S."/>
            <person name="Tegner J."/>
            <person name="Teichmann S.A."/>
            <person name="Ueda H.R."/>
            <person name="van Nimwegen E."/>
            <person name="Verardo R."/>
            <person name="Wei C.L."/>
            <person name="Yagi K."/>
            <person name="Yamanishi H."/>
            <person name="Zabarovsky E."/>
            <person name="Zhu S."/>
            <person name="Zimmer A."/>
            <person name="Hide W."/>
            <person name="Bult C."/>
            <person name="Grimmond S.M."/>
            <person name="Teasdale R.D."/>
            <person name="Liu E.T."/>
            <person name="Brusic V."/>
            <person name="Quackenbush J."/>
            <person name="Wahlestedt C."/>
            <person name="Mattick J.S."/>
            <person name="Hume D.A."/>
            <person name="Kai C."/>
            <person name="Sasaki D."/>
            <person name="Tomaru Y."/>
            <person name="Fukuda S."/>
            <person name="Kanamori-Katayama M."/>
            <person name="Suzuki M."/>
            <person name="Aoki J."/>
            <person name="Arakawa T."/>
            <person name="Iida J."/>
            <person name="Imamura K."/>
            <person name="Itoh M."/>
            <person name="Kato T."/>
            <person name="Kawaji H."/>
            <person name="Kawagashira N."/>
            <person name="Kawashima T."/>
            <person name="Kojima M."/>
            <person name="Kondo S."/>
            <person name="Konno H."/>
            <person name="Nakano K."/>
            <person name="Ninomiya N."/>
            <person name="Nishio T."/>
            <person name="Okada M."/>
            <person name="Plessy C."/>
            <person name="Shibata K."/>
            <person name="Shiraki T."/>
            <person name="Suzuki S."/>
            <person name="Tagami M."/>
            <person name="Waki K."/>
            <person name="Watahiki A."/>
            <person name="Okamura-Oho Y."/>
            <person name="Suzuki H."/>
            <person name="Kawai J."/>
            <person name="Hayashizaki Y."/>
        </authorList>
    </citation>
    <scope>NUCLEOTIDE SEQUENCE [LARGE SCALE MRNA] (ISOFORM 2)</scope>
    <source>
        <strain>C57BL/6J</strain>
        <tissue>Aorta</tissue>
        <tissue>Vein</tissue>
    </source>
</reference>
<reference key="3">
    <citation type="journal article" date="2009" name="PLoS Biol.">
        <title>Lineage-specific biology revealed by a finished genome assembly of the mouse.</title>
        <authorList>
            <person name="Church D.M."/>
            <person name="Goodstadt L."/>
            <person name="Hillier L.W."/>
            <person name="Zody M.C."/>
            <person name="Goldstein S."/>
            <person name="She X."/>
            <person name="Bult C.J."/>
            <person name="Agarwala R."/>
            <person name="Cherry J.L."/>
            <person name="DiCuccio M."/>
            <person name="Hlavina W."/>
            <person name="Kapustin Y."/>
            <person name="Meric P."/>
            <person name="Maglott D."/>
            <person name="Birtle Z."/>
            <person name="Marques A.C."/>
            <person name="Graves T."/>
            <person name="Zhou S."/>
            <person name="Teague B."/>
            <person name="Potamousis K."/>
            <person name="Churas C."/>
            <person name="Place M."/>
            <person name="Herschleb J."/>
            <person name="Runnheim R."/>
            <person name="Forrest D."/>
            <person name="Amos-Landgraf J."/>
            <person name="Schwartz D.C."/>
            <person name="Cheng Z."/>
            <person name="Lindblad-Toh K."/>
            <person name="Eichler E.E."/>
            <person name="Ponting C.P."/>
        </authorList>
    </citation>
    <scope>NUCLEOTIDE SEQUENCE [LARGE SCALE GENOMIC DNA]</scope>
    <source>
        <strain>C57BL/6J</strain>
    </source>
</reference>
<reference key="4">
    <citation type="journal article" date="2007" name="Proc. Natl. Acad. Sci. U.S.A.">
        <title>Otopetrin 1 activation by purinergic nucleotides regulates intracellular calcium.</title>
        <authorList>
            <person name="Hughes I."/>
            <person name="Saito M."/>
            <person name="Schlesinger P.H."/>
            <person name="Ornitz D.M."/>
        </authorList>
    </citation>
    <scope>FUNCTION</scope>
</reference>
<reference key="5">
    <citation type="journal article" date="2010" name="J. Neurophysiol.">
        <title>Regulation of cellular calcium in vestibular supporting cells by otopetrin 1.</title>
        <authorList>
            <person name="Kim E."/>
            <person name="Hyrc K.L."/>
            <person name="Speck J."/>
            <person name="Lundberg Y.W."/>
            <person name="Salles F.T."/>
            <person name="Kachar B."/>
            <person name="Goldberg M.P."/>
            <person name="Warchol M.E."/>
            <person name="Ornitz D.M."/>
        </authorList>
    </citation>
    <scope>FUNCTION</scope>
    <scope>DISRUPTION PHENOTYPE</scope>
    <scope>DEVELOPMENTAL STAGE</scope>
    <scope>TISSUE SPECIFICITY</scope>
</reference>
<reference key="6">
    <citation type="journal article" date="2011" name="Mol. Cell. Neurosci.">
        <title>Missense mutations in Otopetrin 1 affect subcellular localization and inhibition of purinergic signaling in vestibular supporting cells.</title>
        <authorList>
            <person name="Kim E."/>
            <person name="Hyrc K.L."/>
            <person name="Speck J."/>
            <person name="Salles F.T."/>
            <person name="Lundberg Y.W."/>
            <person name="Goldberg M.P."/>
            <person name="Kachar B."/>
            <person name="Warchol M.E."/>
            <person name="Ornitz D.M."/>
        </authorList>
    </citation>
    <scope>SUBCELLULAR LOCATION</scope>
    <scope>MUTAGENESIS OF ALA-151 AND LEU-408</scope>
</reference>
<reference key="7">
    <citation type="journal article" date="2014" name="Diabetes">
        <title>Otopetrin 1 protects mice from obesity-associated metabolic dysfunction through attenuating adipose tissue inflammation.</title>
        <authorList>
            <person name="Wang G.X."/>
            <person name="Cho K.W."/>
            <person name="Uhm M."/>
            <person name="Hu C.R."/>
            <person name="Li S."/>
            <person name="Cozacov Z."/>
            <person name="Xu A.E."/>
            <person name="Cheng J.X."/>
            <person name="Saltiel A.R."/>
            <person name="Lumeng C.N."/>
            <person name="Lin J.D."/>
        </authorList>
    </citation>
    <scope>FUNCTION</scope>
    <scope>INDUCTION</scope>
    <scope>INTERACTION WITH STAT1</scope>
    <scope>TISSUE SPECIFICITY</scope>
</reference>
<reference key="8">
    <citation type="journal article" date="2018" name="Science">
        <title>An evolutionarily conserved gene family encodes proton-selective ion channels.</title>
        <authorList>
            <person name="Tu Y.H."/>
            <person name="Cooper A.J."/>
            <person name="Teng B."/>
            <person name="Chang R.B."/>
            <person name="Artiga D.J."/>
            <person name="Turner H.N."/>
            <person name="Mulhall E.M."/>
            <person name="Ye W."/>
            <person name="Smith A.D."/>
            <person name="Liman E.R."/>
        </authorList>
    </citation>
    <scope>FUNCTION</scope>
    <scope>SUBCELLULAR LOCATION</scope>
    <scope>TISSUE SPECIFICITY</scope>
    <scope>MUTAGENESIS OF ALA-151</scope>
</reference>
<reference key="9">
    <citation type="journal article" date="2019" name="Cell">
        <title>Sour Sensing from the Tongue to the Brain.</title>
        <authorList>
            <person name="Zhang J."/>
            <person name="Jin H."/>
            <person name="Zhang W."/>
            <person name="Ding C."/>
            <person name="O'Keeffe S."/>
            <person name="Ye M."/>
            <person name="Zuker C.S."/>
        </authorList>
    </citation>
    <scope>FUNCTION</scope>
    <scope>TISSUE SPECIFICITY</scope>
    <scope>DISRUPTION PHENOTYPE</scope>
</reference>
<reference key="10">
    <citation type="journal article" date="2019" name="Curr. Biol.">
        <title>Cellular and Neural Responses to Sour Stimuli Require the Proton Channel Otop1.</title>
        <authorList>
            <person name="Teng B."/>
            <person name="Wilson C.E."/>
            <person name="Tu Y.H."/>
            <person name="Joshi N.R."/>
            <person name="Kinnamon S.C."/>
            <person name="Liman E.R."/>
        </authorList>
    </citation>
    <scope>FUNCTION</scope>
    <scope>TRANSPORTER ACTIVITY</scope>
    <scope>DISRUPTION PHENOTYPE</scope>
    <scope>TISSUE SPECIFICITY</scope>
</reference>
<reference key="11">
    <citation type="journal article" date="2019" name="Nat. Struct. Mol. Biol.">
        <title>Structures of the otopetrin proton channels Otop1 and Otop3.</title>
        <authorList>
            <person name="Saotome K."/>
            <person name="Teng B."/>
            <person name="Tsui C.C.A."/>
            <person name="Lee W.H."/>
            <person name="Tu Y.H."/>
            <person name="Kaplan J.P."/>
            <person name="Sansom M.S.P."/>
            <person name="Liman E.R."/>
            <person name="Ward A.B."/>
        </authorList>
    </citation>
    <scope>FUNCTION</scope>
    <scope>TRANSPORTER ACTIVITY</scope>
    <scope>MUTAGENESIS OF LYS-149; GLU-219; GLU-433 AND ARG-586</scope>
</reference>
<reference key="12">
    <citation type="journal article" date="2023" name="Elife">
        <title>Zinc activation of OTOP proton channels identifies structural elements of the gating apparatus.</title>
        <authorList>
            <person name="Teng B."/>
            <person name="Kaplan J.P."/>
            <person name="Liang Z."/>
            <person name="Chyung K.S."/>
            <person name="Goldschen-Ohm M.P."/>
            <person name="Liman E.R."/>
        </authorList>
    </citation>
    <scope>FUNCTION</scope>
    <scope>TRANSPORTER ACTIVITY</scope>
    <scope>ACTIVITY REGULATION</scope>
    <scope>MUTAGENESIS OF ARG-554</scope>
</reference>
<reference key="13">
    <citation type="journal article" date="2023" name="Nat. Commun.">
        <title>Vertebrate OTOP1 is also an alkali-activated channel.</title>
        <authorList>
            <person name="Tian L."/>
            <person name="Zhang H."/>
            <person name="Yang S."/>
            <person name="Luo A."/>
            <person name="Kamau P.M."/>
            <person name="Hu J."/>
            <person name="Luo L."/>
            <person name="Lai R."/>
        </authorList>
    </citation>
    <scope>FUNCTION</scope>
    <scope>TRANSPORTER ACTIVITY</scope>
    <scope>ACTIVITY REGULATION</scope>
    <scope>MUTAGENESIS OF HIS-185; LYS-187; LYS-221; HIS-222 AND ARG-554</scope>
    <scope>TISSUE SPECIFICITY</scope>
</reference>
<reference key="14">
    <citation type="journal article" date="2023" name="Nat. Commun.">
        <title>The proton channel OTOP1 is a sensor for the taste of ammonium chloride.</title>
        <authorList>
            <person name="Liang Z."/>
            <person name="Wilson C.E."/>
            <person name="Teng B."/>
            <person name="Kinnamon S.C."/>
            <person name="Liman E.R."/>
        </authorList>
    </citation>
    <scope>FUNCTION</scope>
    <scope>TRANSPORTER ACTIVITY</scope>
    <scope>ACTIVITY REGULATION</scope>
    <scope>MUTAGENESIS OF LYS-187; ARG-292; LYS-527 AND ARG-528</scope>
    <scope>DISRUPTION PHENOTYPE</scope>
</reference>
<name>OTOP1_MOUSE</name>
<keyword id="KW-0025">Alternative splicing</keyword>
<keyword id="KW-0091">Biomineralization</keyword>
<keyword id="KW-1003">Cell membrane</keyword>
<keyword id="KW-0966">Cell projection</keyword>
<keyword id="KW-0375">Hydrogen ion transport</keyword>
<keyword id="KW-0407">Ion channel</keyword>
<keyword id="KW-0406">Ion transport</keyword>
<keyword id="KW-0472">Membrane</keyword>
<keyword id="KW-1185">Reference proteome</keyword>
<keyword id="KW-0812">Transmembrane</keyword>
<keyword id="KW-1133">Transmembrane helix</keyword>
<keyword id="KW-0813">Transport</keyword>
<proteinExistence type="evidence at protein level"/>